<name>NUSB_SALTY</name>
<sequence>MKPAARRRARECAVQALYSWQLSQNDIADVEYQFLAEQDVKDVDVLYFRELLSGVATNSAYLDGLMKPYLSRLLEELGQVEKAVLRIALFELSKRSDVPYKVAINEAIELAKTFGAEDSHKFVNGVLDKAAPVIRPNKK</sequence>
<feature type="chain" id="PRO_0000176574" description="Transcription antitermination protein NusB">
    <location>
        <begin position="1"/>
        <end position="139"/>
    </location>
</feature>
<proteinExistence type="inferred from homology"/>
<dbReference type="EMBL" id="AE006468">
    <property type="protein sequence ID" value="AAL19372.1"/>
    <property type="molecule type" value="Genomic_DNA"/>
</dbReference>
<dbReference type="RefSeq" id="NP_459413.1">
    <property type="nucleotide sequence ID" value="NC_003197.2"/>
</dbReference>
<dbReference type="RefSeq" id="WP_000801129.1">
    <property type="nucleotide sequence ID" value="NC_003197.2"/>
</dbReference>
<dbReference type="SMR" id="Q8ZRD3"/>
<dbReference type="STRING" id="99287.STM0418"/>
<dbReference type="PaxDb" id="99287-STM0418"/>
<dbReference type="GeneID" id="1251937"/>
<dbReference type="GeneID" id="89550189"/>
<dbReference type="KEGG" id="stm:STM0418"/>
<dbReference type="PATRIC" id="fig|99287.12.peg.447"/>
<dbReference type="HOGENOM" id="CLU_087843_4_1_6"/>
<dbReference type="OMA" id="DRMPVVD"/>
<dbReference type="PhylomeDB" id="Q8ZRD3"/>
<dbReference type="BioCyc" id="SENT99287:STM0418-MONOMER"/>
<dbReference type="PRO" id="PR:Q8ZRD3"/>
<dbReference type="Proteomes" id="UP000001014">
    <property type="component" value="Chromosome"/>
</dbReference>
<dbReference type="GO" id="GO:0005829">
    <property type="term" value="C:cytosol"/>
    <property type="evidence" value="ECO:0000318"/>
    <property type="project" value="GO_Central"/>
</dbReference>
<dbReference type="GO" id="GO:0003723">
    <property type="term" value="F:RNA binding"/>
    <property type="evidence" value="ECO:0007669"/>
    <property type="project" value="UniProtKB-UniRule"/>
</dbReference>
<dbReference type="GO" id="GO:0006353">
    <property type="term" value="P:DNA-templated transcription termination"/>
    <property type="evidence" value="ECO:0007669"/>
    <property type="project" value="UniProtKB-UniRule"/>
</dbReference>
<dbReference type="GO" id="GO:0031564">
    <property type="term" value="P:transcription antitermination"/>
    <property type="evidence" value="ECO:0007669"/>
    <property type="project" value="UniProtKB-KW"/>
</dbReference>
<dbReference type="CDD" id="cd00619">
    <property type="entry name" value="Terminator_NusB"/>
    <property type="match status" value="1"/>
</dbReference>
<dbReference type="FunFam" id="1.10.940.10:FF:000001">
    <property type="entry name" value="Transcription antitermination factor NusB"/>
    <property type="match status" value="1"/>
</dbReference>
<dbReference type="Gene3D" id="1.10.940.10">
    <property type="entry name" value="NusB-like"/>
    <property type="match status" value="1"/>
</dbReference>
<dbReference type="HAMAP" id="MF_00073">
    <property type="entry name" value="NusB"/>
    <property type="match status" value="1"/>
</dbReference>
<dbReference type="InterPro" id="IPR035926">
    <property type="entry name" value="NusB-like_sf"/>
</dbReference>
<dbReference type="InterPro" id="IPR011605">
    <property type="entry name" value="NusB_fam"/>
</dbReference>
<dbReference type="InterPro" id="IPR006027">
    <property type="entry name" value="NusB_RsmB_TIM44"/>
</dbReference>
<dbReference type="NCBIfam" id="TIGR01951">
    <property type="entry name" value="nusB"/>
    <property type="match status" value="1"/>
</dbReference>
<dbReference type="PANTHER" id="PTHR11078:SF3">
    <property type="entry name" value="ANTITERMINATION NUSB DOMAIN-CONTAINING PROTEIN"/>
    <property type="match status" value="1"/>
</dbReference>
<dbReference type="PANTHER" id="PTHR11078">
    <property type="entry name" value="N UTILIZATION SUBSTANCE PROTEIN B-RELATED"/>
    <property type="match status" value="1"/>
</dbReference>
<dbReference type="Pfam" id="PF01029">
    <property type="entry name" value="NusB"/>
    <property type="match status" value="1"/>
</dbReference>
<dbReference type="SUPFAM" id="SSF48013">
    <property type="entry name" value="NusB-like"/>
    <property type="match status" value="1"/>
</dbReference>
<comment type="function">
    <text evidence="1">Involved in transcription antitermination. Required for transcription of ribosomal RNA (rRNA) genes. Binds specifically to the boxA antiterminator sequence of the ribosomal RNA (rrn) operons.</text>
</comment>
<comment type="similarity">
    <text evidence="1">Belongs to the NusB family.</text>
</comment>
<organism>
    <name type="scientific">Salmonella typhimurium (strain LT2 / SGSC1412 / ATCC 700720)</name>
    <dbReference type="NCBI Taxonomy" id="99287"/>
    <lineage>
        <taxon>Bacteria</taxon>
        <taxon>Pseudomonadati</taxon>
        <taxon>Pseudomonadota</taxon>
        <taxon>Gammaproteobacteria</taxon>
        <taxon>Enterobacterales</taxon>
        <taxon>Enterobacteriaceae</taxon>
        <taxon>Salmonella</taxon>
    </lineage>
</organism>
<protein>
    <recommendedName>
        <fullName evidence="1">Transcription antitermination protein NusB</fullName>
    </recommendedName>
    <alternativeName>
        <fullName evidence="1">Antitermination factor NusB</fullName>
    </alternativeName>
</protein>
<keyword id="KW-1185">Reference proteome</keyword>
<keyword id="KW-0694">RNA-binding</keyword>
<keyword id="KW-0804">Transcription</keyword>
<keyword id="KW-0889">Transcription antitermination</keyword>
<keyword id="KW-0805">Transcription regulation</keyword>
<gene>
    <name evidence="1" type="primary">nusB</name>
    <name type="ordered locus">STM0418</name>
</gene>
<accession>Q8ZRD3</accession>
<evidence type="ECO:0000255" key="1">
    <source>
        <dbReference type="HAMAP-Rule" id="MF_00073"/>
    </source>
</evidence>
<reference key="1">
    <citation type="journal article" date="2001" name="Nature">
        <title>Complete genome sequence of Salmonella enterica serovar Typhimurium LT2.</title>
        <authorList>
            <person name="McClelland M."/>
            <person name="Sanderson K.E."/>
            <person name="Spieth J."/>
            <person name="Clifton S.W."/>
            <person name="Latreille P."/>
            <person name="Courtney L."/>
            <person name="Porwollik S."/>
            <person name="Ali J."/>
            <person name="Dante M."/>
            <person name="Du F."/>
            <person name="Hou S."/>
            <person name="Layman D."/>
            <person name="Leonard S."/>
            <person name="Nguyen C."/>
            <person name="Scott K."/>
            <person name="Holmes A."/>
            <person name="Grewal N."/>
            <person name="Mulvaney E."/>
            <person name="Ryan E."/>
            <person name="Sun H."/>
            <person name="Florea L."/>
            <person name="Miller W."/>
            <person name="Stoneking T."/>
            <person name="Nhan M."/>
            <person name="Waterston R."/>
            <person name="Wilson R.K."/>
        </authorList>
    </citation>
    <scope>NUCLEOTIDE SEQUENCE [LARGE SCALE GENOMIC DNA]</scope>
    <source>
        <strain>LT2 / SGSC1412 / ATCC 700720</strain>
    </source>
</reference>